<geneLocation type="chloroplast"/>
<name>MATK_ANTVS</name>
<keyword id="KW-0150">Chloroplast</keyword>
<keyword id="KW-0507">mRNA processing</keyword>
<keyword id="KW-0934">Plastid</keyword>
<keyword id="KW-0694">RNA-binding</keyword>
<keyword id="KW-0819">tRNA processing</keyword>
<protein>
    <recommendedName>
        <fullName evidence="1">Maturase K</fullName>
    </recommendedName>
    <alternativeName>
        <fullName evidence="1">Intron maturase</fullName>
    </alternativeName>
</protein>
<reference key="1">
    <citation type="journal article" date="2004" name="Mol. Phylogenet. Evol.">
        <title>Phylogenetic relationships in Nicotiana (Solanaceae) inferred from multiple plastid regions.</title>
        <authorList>
            <person name="Clarkson J.J."/>
            <person name="Knapp S."/>
            <person name="Garcia V.F."/>
            <person name="Olmstead R.G."/>
            <person name="Leitch A.R."/>
            <person name="Chase M.W."/>
        </authorList>
    </citation>
    <scope>NUCLEOTIDE SEQUENCE [GENOMIC DNA]</scope>
</reference>
<gene>
    <name evidence="1" type="primary">matK</name>
</gene>
<comment type="function">
    <text evidence="1">Usually encoded in the trnK tRNA gene intron. Probably assists in splicing its own and other chloroplast group II introns.</text>
</comment>
<comment type="subcellular location">
    <subcellularLocation>
        <location>Plastid</location>
        <location>Chloroplast</location>
    </subcellularLocation>
</comment>
<comment type="similarity">
    <text evidence="1">Belongs to the intron maturase 2 family. MatK subfamily.</text>
</comment>
<proteinExistence type="inferred from homology"/>
<organism>
    <name type="scientific">Anthocercis viscosa</name>
    <name type="common">Sticky tailflower</name>
    <dbReference type="NCBI Taxonomy" id="33112"/>
    <lineage>
        <taxon>Eukaryota</taxon>
        <taxon>Viridiplantae</taxon>
        <taxon>Streptophyta</taxon>
        <taxon>Embryophyta</taxon>
        <taxon>Tracheophyta</taxon>
        <taxon>Spermatophyta</taxon>
        <taxon>Magnoliopsida</taxon>
        <taxon>eudicotyledons</taxon>
        <taxon>Gunneridae</taxon>
        <taxon>Pentapetalae</taxon>
        <taxon>asterids</taxon>
        <taxon>lamiids</taxon>
        <taxon>Solanales</taxon>
        <taxon>Solanaceae</taxon>
        <taxon>Nicotianoideae</taxon>
        <taxon>Anthocercideae</taxon>
        <taxon>Anthocercis</taxon>
    </lineage>
</organism>
<sequence>MEEIQRYLQPDRSQQHNFLYPLIFQEYIYALAHDHGLNRNRSILLENPGYDNKFSFLIVKRLITRMYQQNHFLISTNDSNKNSFLGCNKSLYSQMISEGFAFIAEIPFSLRLMSSLSSFEGKNIFKSHNLRSIHSTFPFLEDNFSHLNYVLDILIPYPVHLEILVQTLRYWVKDASSLHLLRFFLHEYWNLNSLITSKKPGYSFSKKNQRFFFFLYNSYGYECESTFVFLRNQSSHLRSTSFGALLERIYFYGKIERLVEVFAKDFQVTLWLFKDPFMHYVRYQGKSIMASKGTFLLMNKWKFYLVNFWQCHFSLCFHTGRIHINQLSNHSRDFMGYLSSVRLNPSMVRSQMLENSFLINNAIKKFDILVPIIPLIGSLAKENFCTVLGHPISKPVWSDLSDSDIIDRFGRICRNIFHYYSGSSKKKTLYRIKYILRLSCARTLARKHKSTVRTFLKRSGSELLEEFLTSEEQVLSLTFPRASSSLWGVYRSRIWYLDIFCINDLANSQ</sequence>
<dbReference type="EMBL" id="AJ585863">
    <property type="protein sequence ID" value="CAE51504.1"/>
    <property type="molecule type" value="Genomic_DNA"/>
</dbReference>
<dbReference type="GO" id="GO:0009507">
    <property type="term" value="C:chloroplast"/>
    <property type="evidence" value="ECO:0007669"/>
    <property type="project" value="UniProtKB-SubCell"/>
</dbReference>
<dbReference type="GO" id="GO:0003723">
    <property type="term" value="F:RNA binding"/>
    <property type="evidence" value="ECO:0007669"/>
    <property type="project" value="UniProtKB-KW"/>
</dbReference>
<dbReference type="GO" id="GO:0006397">
    <property type="term" value="P:mRNA processing"/>
    <property type="evidence" value="ECO:0007669"/>
    <property type="project" value="UniProtKB-KW"/>
</dbReference>
<dbReference type="GO" id="GO:0008380">
    <property type="term" value="P:RNA splicing"/>
    <property type="evidence" value="ECO:0007669"/>
    <property type="project" value="UniProtKB-UniRule"/>
</dbReference>
<dbReference type="GO" id="GO:0008033">
    <property type="term" value="P:tRNA processing"/>
    <property type="evidence" value="ECO:0007669"/>
    <property type="project" value="UniProtKB-KW"/>
</dbReference>
<dbReference type="HAMAP" id="MF_01390">
    <property type="entry name" value="MatK"/>
    <property type="match status" value="1"/>
</dbReference>
<dbReference type="InterPro" id="IPR024937">
    <property type="entry name" value="Domain_X"/>
</dbReference>
<dbReference type="InterPro" id="IPR002866">
    <property type="entry name" value="Maturase_MatK"/>
</dbReference>
<dbReference type="InterPro" id="IPR024942">
    <property type="entry name" value="Maturase_MatK_N"/>
</dbReference>
<dbReference type="PANTHER" id="PTHR34811">
    <property type="entry name" value="MATURASE K"/>
    <property type="match status" value="1"/>
</dbReference>
<dbReference type="PANTHER" id="PTHR34811:SF1">
    <property type="entry name" value="MATURASE K"/>
    <property type="match status" value="1"/>
</dbReference>
<dbReference type="Pfam" id="PF01348">
    <property type="entry name" value="Intron_maturas2"/>
    <property type="match status" value="1"/>
</dbReference>
<dbReference type="Pfam" id="PF01824">
    <property type="entry name" value="MatK_N"/>
    <property type="match status" value="1"/>
</dbReference>
<evidence type="ECO:0000255" key="1">
    <source>
        <dbReference type="HAMAP-Rule" id="MF_01390"/>
    </source>
</evidence>
<accession>Q70D24</accession>
<feature type="chain" id="PRO_0000143240" description="Maturase K">
    <location>
        <begin position="1"/>
        <end position="509"/>
    </location>
</feature>